<sequence length="84" mass="9716">MTDQIRTLQGRVVSDKMEKSMVVAIERVVKHPIYGKFIRRTTKLHVHDENNECGIGDVVEIRECRPLSKTKSWTLVRVVEKAIL</sequence>
<evidence type="ECO:0000255" key="1">
    <source>
        <dbReference type="HAMAP-Rule" id="MF_01345"/>
    </source>
</evidence>
<evidence type="ECO:0000305" key="2"/>
<keyword id="KW-0687">Ribonucleoprotein</keyword>
<keyword id="KW-0689">Ribosomal protein</keyword>
<keyword id="KW-0694">RNA-binding</keyword>
<keyword id="KW-0699">rRNA-binding</keyword>
<organism>
    <name type="scientific">Yersinia pestis bv. Antiqua (strain Antiqua)</name>
    <dbReference type="NCBI Taxonomy" id="360102"/>
    <lineage>
        <taxon>Bacteria</taxon>
        <taxon>Pseudomonadati</taxon>
        <taxon>Pseudomonadota</taxon>
        <taxon>Gammaproteobacteria</taxon>
        <taxon>Enterobacterales</taxon>
        <taxon>Yersiniaceae</taxon>
        <taxon>Yersinia</taxon>
    </lineage>
</organism>
<proteinExistence type="inferred from homology"/>
<dbReference type="EMBL" id="CP000308">
    <property type="protein sequence ID" value="ABG15216.1"/>
    <property type="molecule type" value="Genomic_DNA"/>
</dbReference>
<dbReference type="RefSeq" id="WP_002228135.1">
    <property type="nucleotide sequence ID" value="NZ_CP009906.1"/>
</dbReference>
<dbReference type="SMR" id="Q1C2V6"/>
<dbReference type="GeneID" id="97454240"/>
<dbReference type="KEGG" id="ypa:YPA_3254"/>
<dbReference type="Proteomes" id="UP000001971">
    <property type="component" value="Chromosome"/>
</dbReference>
<dbReference type="GO" id="GO:0022627">
    <property type="term" value="C:cytosolic small ribosomal subunit"/>
    <property type="evidence" value="ECO:0007669"/>
    <property type="project" value="TreeGrafter"/>
</dbReference>
<dbReference type="GO" id="GO:0019843">
    <property type="term" value="F:rRNA binding"/>
    <property type="evidence" value="ECO:0007669"/>
    <property type="project" value="UniProtKB-UniRule"/>
</dbReference>
<dbReference type="GO" id="GO:0003735">
    <property type="term" value="F:structural constituent of ribosome"/>
    <property type="evidence" value="ECO:0007669"/>
    <property type="project" value="InterPro"/>
</dbReference>
<dbReference type="GO" id="GO:0006412">
    <property type="term" value="P:translation"/>
    <property type="evidence" value="ECO:0007669"/>
    <property type="project" value="UniProtKB-UniRule"/>
</dbReference>
<dbReference type="CDD" id="cd00364">
    <property type="entry name" value="Ribosomal_uS17"/>
    <property type="match status" value="1"/>
</dbReference>
<dbReference type="FunFam" id="2.40.50.140:FF:000014">
    <property type="entry name" value="30S ribosomal protein S17"/>
    <property type="match status" value="1"/>
</dbReference>
<dbReference type="Gene3D" id="2.40.50.140">
    <property type="entry name" value="Nucleic acid-binding proteins"/>
    <property type="match status" value="1"/>
</dbReference>
<dbReference type="HAMAP" id="MF_01345_B">
    <property type="entry name" value="Ribosomal_uS17_B"/>
    <property type="match status" value="1"/>
</dbReference>
<dbReference type="InterPro" id="IPR012340">
    <property type="entry name" value="NA-bd_OB-fold"/>
</dbReference>
<dbReference type="InterPro" id="IPR000266">
    <property type="entry name" value="Ribosomal_uS17"/>
</dbReference>
<dbReference type="InterPro" id="IPR019984">
    <property type="entry name" value="Ribosomal_uS17_bact/chlr"/>
</dbReference>
<dbReference type="InterPro" id="IPR019979">
    <property type="entry name" value="Ribosomal_uS17_CS"/>
</dbReference>
<dbReference type="NCBIfam" id="NF004123">
    <property type="entry name" value="PRK05610.1"/>
    <property type="match status" value="1"/>
</dbReference>
<dbReference type="NCBIfam" id="TIGR03635">
    <property type="entry name" value="uS17_bact"/>
    <property type="match status" value="1"/>
</dbReference>
<dbReference type="PANTHER" id="PTHR10744">
    <property type="entry name" value="40S RIBOSOMAL PROTEIN S11 FAMILY MEMBER"/>
    <property type="match status" value="1"/>
</dbReference>
<dbReference type="PANTHER" id="PTHR10744:SF1">
    <property type="entry name" value="SMALL RIBOSOMAL SUBUNIT PROTEIN US17M"/>
    <property type="match status" value="1"/>
</dbReference>
<dbReference type="Pfam" id="PF00366">
    <property type="entry name" value="Ribosomal_S17"/>
    <property type="match status" value="1"/>
</dbReference>
<dbReference type="PRINTS" id="PR00973">
    <property type="entry name" value="RIBOSOMALS17"/>
</dbReference>
<dbReference type="SUPFAM" id="SSF50249">
    <property type="entry name" value="Nucleic acid-binding proteins"/>
    <property type="match status" value="1"/>
</dbReference>
<dbReference type="PROSITE" id="PS00056">
    <property type="entry name" value="RIBOSOMAL_S17"/>
    <property type="match status" value="1"/>
</dbReference>
<protein>
    <recommendedName>
        <fullName evidence="1">Small ribosomal subunit protein uS17</fullName>
    </recommendedName>
    <alternativeName>
        <fullName evidence="2">30S ribosomal protein S17</fullName>
    </alternativeName>
</protein>
<comment type="function">
    <text evidence="1">One of the primary rRNA binding proteins, it binds specifically to the 5'-end of 16S ribosomal RNA.</text>
</comment>
<comment type="subunit">
    <text evidence="1">Part of the 30S ribosomal subunit.</text>
</comment>
<comment type="similarity">
    <text evidence="1">Belongs to the universal ribosomal protein uS17 family.</text>
</comment>
<gene>
    <name evidence="1" type="primary">rpsQ</name>
    <name type="ordered locus">YPA_3254</name>
</gene>
<feature type="chain" id="PRO_0000255708" description="Small ribosomal subunit protein uS17">
    <location>
        <begin position="1"/>
        <end position="84"/>
    </location>
</feature>
<reference key="1">
    <citation type="journal article" date="2006" name="J. Bacteriol.">
        <title>Complete genome sequence of Yersinia pestis strains Antiqua and Nepal516: evidence of gene reduction in an emerging pathogen.</title>
        <authorList>
            <person name="Chain P.S.G."/>
            <person name="Hu P."/>
            <person name="Malfatti S.A."/>
            <person name="Radnedge L."/>
            <person name="Larimer F."/>
            <person name="Vergez L.M."/>
            <person name="Worsham P."/>
            <person name="Chu M.C."/>
            <person name="Andersen G.L."/>
        </authorList>
    </citation>
    <scope>NUCLEOTIDE SEQUENCE [LARGE SCALE GENOMIC DNA]</scope>
    <source>
        <strain>Antiqua</strain>
    </source>
</reference>
<name>RS17_YERPA</name>
<accession>Q1C2V6</accession>